<name>O36O_CONAE</name>
<keyword id="KW-0027">Amidation</keyword>
<keyword id="KW-0165">Cleavage on pair of basic residues</keyword>
<keyword id="KW-1015">Disulfide bond</keyword>
<keyword id="KW-0960">Knottin</keyword>
<keyword id="KW-0528">Neurotoxin</keyword>
<keyword id="KW-0964">Secreted</keyword>
<keyword id="KW-0732">Signal</keyword>
<keyword id="KW-0800">Toxin</keyword>
<dbReference type="EMBL" id="AF215069">
    <property type="protein sequence ID" value="AAG60497.1"/>
    <property type="molecule type" value="mRNA"/>
</dbReference>
<dbReference type="SMR" id="Q9BP69"/>
<dbReference type="ConoServer" id="756">
    <property type="toxin name" value="Ar6.24 precursor"/>
</dbReference>
<dbReference type="GO" id="GO:0005576">
    <property type="term" value="C:extracellular region"/>
    <property type="evidence" value="ECO:0007669"/>
    <property type="project" value="UniProtKB-SubCell"/>
</dbReference>
<dbReference type="GO" id="GO:0008200">
    <property type="term" value="F:ion channel inhibitor activity"/>
    <property type="evidence" value="ECO:0007669"/>
    <property type="project" value="InterPro"/>
</dbReference>
<dbReference type="GO" id="GO:0090729">
    <property type="term" value="F:toxin activity"/>
    <property type="evidence" value="ECO:0007669"/>
    <property type="project" value="UniProtKB-KW"/>
</dbReference>
<dbReference type="InterPro" id="IPR004214">
    <property type="entry name" value="Conotoxin"/>
</dbReference>
<dbReference type="Pfam" id="PF02950">
    <property type="entry name" value="Conotoxin"/>
    <property type="match status" value="1"/>
</dbReference>
<comment type="subcellular location">
    <subcellularLocation>
        <location evidence="1">Secreted</location>
    </subcellularLocation>
</comment>
<comment type="tissue specificity">
    <text>Expressed by the venom duct.</text>
</comment>
<comment type="domain">
    <text evidence="1">The presence of a 'disulfide through disulfide knot' structurally defines this protein as a knottin.</text>
</comment>
<comment type="domain">
    <text>The cysteine framework is VI/VII (C-C-CC-C-C).</text>
</comment>
<comment type="similarity">
    <text evidence="3">Belongs to the conotoxin O3 superfamily.</text>
</comment>
<protein>
    <recommendedName>
        <fullName>Conotoxin ArMSGL-021</fullName>
    </recommendedName>
</protein>
<reference key="1">
    <citation type="journal article" date="2001" name="Mol. Biol. Evol.">
        <title>Mechanisms for evolving hypervariability: the case of conopeptides.</title>
        <authorList>
            <person name="Conticello S.G."/>
            <person name="Gilad Y."/>
            <person name="Avidan N."/>
            <person name="Ben-Asher E."/>
            <person name="Levy Z."/>
            <person name="Fainzilber M."/>
        </authorList>
    </citation>
    <scope>NUCLEOTIDE SEQUENCE [MRNA]</scope>
    <source>
        <tissue>Venom duct</tissue>
    </source>
</reference>
<proteinExistence type="evidence at transcript level"/>
<sequence>MSRLGIMVLTLLLLVFIVTSHQDAGEKQATHRGAINFRWRRSLIRRTATEECEEYCEDEEKTCCGLEDGEPVCATTCLG</sequence>
<organism>
    <name type="scientific">Conus arenatus</name>
    <name type="common">Sand-dusted cone</name>
    <dbReference type="NCBI Taxonomy" id="89451"/>
    <lineage>
        <taxon>Eukaryota</taxon>
        <taxon>Metazoa</taxon>
        <taxon>Spiralia</taxon>
        <taxon>Lophotrochozoa</taxon>
        <taxon>Mollusca</taxon>
        <taxon>Gastropoda</taxon>
        <taxon>Caenogastropoda</taxon>
        <taxon>Neogastropoda</taxon>
        <taxon>Conoidea</taxon>
        <taxon>Conidae</taxon>
        <taxon>Conus</taxon>
    </lineage>
</organism>
<feature type="signal peptide" evidence="2">
    <location>
        <begin position="1"/>
        <end position="20"/>
    </location>
</feature>
<feature type="propeptide" id="PRO_0000404872" evidence="1">
    <location>
        <begin position="21"/>
        <end position="44"/>
    </location>
</feature>
<feature type="peptide" id="PRO_0000404873" description="Conotoxin ArMSGL-021">
    <location>
        <begin position="47"/>
        <end position="78"/>
    </location>
</feature>
<feature type="modified residue" description="Leucine amide" evidence="1">
    <location>
        <position position="78"/>
    </location>
</feature>
<feature type="disulfide bond" evidence="1">
    <location>
        <begin position="52"/>
        <end position="64"/>
    </location>
</feature>
<feature type="disulfide bond" evidence="1">
    <location>
        <begin position="56"/>
        <end position="73"/>
    </location>
</feature>
<feature type="disulfide bond" evidence="1">
    <location>
        <begin position="63"/>
        <end position="77"/>
    </location>
</feature>
<evidence type="ECO:0000250" key="1"/>
<evidence type="ECO:0000255" key="2"/>
<evidence type="ECO:0000305" key="3"/>
<accession>Q9BP69</accession>